<reference key="1">
    <citation type="journal article" date="2005" name="Proc. Natl. Acad. Sci. U.S.A.">
        <title>The genome of Salinibacter ruber: convergence and gene exchange among hyperhalophilic bacteria and archaea.</title>
        <authorList>
            <person name="Mongodin E.F."/>
            <person name="Nelson K.E."/>
            <person name="Daugherty S."/>
            <person name="DeBoy R.T."/>
            <person name="Wister J."/>
            <person name="Khouri H."/>
            <person name="Weidman J."/>
            <person name="Walsh D.A."/>
            <person name="Papke R.T."/>
            <person name="Sanchez Perez G."/>
            <person name="Sharma A.K."/>
            <person name="Nesbo C.L."/>
            <person name="MacLeod D."/>
            <person name="Bapteste E."/>
            <person name="Doolittle W.F."/>
            <person name="Charlebois R.L."/>
            <person name="Legault B."/>
            <person name="Rodriguez-Valera F."/>
        </authorList>
    </citation>
    <scope>NUCLEOTIDE SEQUENCE [LARGE SCALE GENOMIC DNA]</scope>
    <source>
        <strain>DSM 13855 / CECT 5946 / M31</strain>
    </source>
</reference>
<accession>Q2S3Q7</accession>
<name>RL16_SALRD</name>
<comment type="function">
    <text evidence="1">Binds 23S rRNA and is also seen to make contacts with the A and possibly P site tRNAs.</text>
</comment>
<comment type="subunit">
    <text evidence="1">Part of the 50S ribosomal subunit.</text>
</comment>
<comment type="similarity">
    <text evidence="1">Belongs to the universal ribosomal protein uL16 family.</text>
</comment>
<dbReference type="EMBL" id="CP000159">
    <property type="protein sequence ID" value="ABC44460.1"/>
    <property type="molecule type" value="Genomic_DNA"/>
</dbReference>
<dbReference type="RefSeq" id="WP_011403802.1">
    <property type="nucleotide sequence ID" value="NC_007677.1"/>
</dbReference>
<dbReference type="RefSeq" id="YP_445174.1">
    <property type="nucleotide sequence ID" value="NC_007677.1"/>
</dbReference>
<dbReference type="SMR" id="Q2S3Q7"/>
<dbReference type="STRING" id="309807.SRU_1042"/>
<dbReference type="EnsemblBacteria" id="ABC44460">
    <property type="protein sequence ID" value="ABC44460"/>
    <property type="gene ID" value="SRU_1042"/>
</dbReference>
<dbReference type="GeneID" id="83727971"/>
<dbReference type="KEGG" id="sru:SRU_1042"/>
<dbReference type="PATRIC" id="fig|309807.25.peg.1080"/>
<dbReference type="eggNOG" id="COG0197">
    <property type="taxonomic scope" value="Bacteria"/>
</dbReference>
<dbReference type="HOGENOM" id="CLU_078858_2_1_10"/>
<dbReference type="OrthoDB" id="9802589at2"/>
<dbReference type="Proteomes" id="UP000008674">
    <property type="component" value="Chromosome"/>
</dbReference>
<dbReference type="GO" id="GO:0022625">
    <property type="term" value="C:cytosolic large ribosomal subunit"/>
    <property type="evidence" value="ECO:0007669"/>
    <property type="project" value="TreeGrafter"/>
</dbReference>
<dbReference type="GO" id="GO:0019843">
    <property type="term" value="F:rRNA binding"/>
    <property type="evidence" value="ECO:0007669"/>
    <property type="project" value="UniProtKB-UniRule"/>
</dbReference>
<dbReference type="GO" id="GO:0003735">
    <property type="term" value="F:structural constituent of ribosome"/>
    <property type="evidence" value="ECO:0007669"/>
    <property type="project" value="InterPro"/>
</dbReference>
<dbReference type="GO" id="GO:0000049">
    <property type="term" value="F:tRNA binding"/>
    <property type="evidence" value="ECO:0007669"/>
    <property type="project" value="UniProtKB-KW"/>
</dbReference>
<dbReference type="GO" id="GO:0006412">
    <property type="term" value="P:translation"/>
    <property type="evidence" value="ECO:0007669"/>
    <property type="project" value="UniProtKB-UniRule"/>
</dbReference>
<dbReference type="CDD" id="cd01433">
    <property type="entry name" value="Ribosomal_L16_L10e"/>
    <property type="match status" value="1"/>
</dbReference>
<dbReference type="FunFam" id="3.90.1170.10:FF:000001">
    <property type="entry name" value="50S ribosomal protein L16"/>
    <property type="match status" value="1"/>
</dbReference>
<dbReference type="Gene3D" id="3.90.1170.10">
    <property type="entry name" value="Ribosomal protein L10e/L16"/>
    <property type="match status" value="1"/>
</dbReference>
<dbReference type="HAMAP" id="MF_01342">
    <property type="entry name" value="Ribosomal_uL16"/>
    <property type="match status" value="1"/>
</dbReference>
<dbReference type="InterPro" id="IPR047873">
    <property type="entry name" value="Ribosomal_uL16"/>
</dbReference>
<dbReference type="InterPro" id="IPR000114">
    <property type="entry name" value="Ribosomal_uL16_bact-type"/>
</dbReference>
<dbReference type="InterPro" id="IPR020798">
    <property type="entry name" value="Ribosomal_uL16_CS"/>
</dbReference>
<dbReference type="InterPro" id="IPR016180">
    <property type="entry name" value="Ribosomal_uL16_dom"/>
</dbReference>
<dbReference type="InterPro" id="IPR036920">
    <property type="entry name" value="Ribosomal_uL16_sf"/>
</dbReference>
<dbReference type="NCBIfam" id="TIGR01164">
    <property type="entry name" value="rplP_bact"/>
    <property type="match status" value="1"/>
</dbReference>
<dbReference type="PANTHER" id="PTHR12220">
    <property type="entry name" value="50S/60S RIBOSOMAL PROTEIN L16"/>
    <property type="match status" value="1"/>
</dbReference>
<dbReference type="PANTHER" id="PTHR12220:SF13">
    <property type="entry name" value="LARGE RIBOSOMAL SUBUNIT PROTEIN UL16M"/>
    <property type="match status" value="1"/>
</dbReference>
<dbReference type="Pfam" id="PF00252">
    <property type="entry name" value="Ribosomal_L16"/>
    <property type="match status" value="1"/>
</dbReference>
<dbReference type="PRINTS" id="PR00060">
    <property type="entry name" value="RIBOSOMALL16"/>
</dbReference>
<dbReference type="SUPFAM" id="SSF54686">
    <property type="entry name" value="Ribosomal protein L16p/L10e"/>
    <property type="match status" value="1"/>
</dbReference>
<dbReference type="PROSITE" id="PS00586">
    <property type="entry name" value="RIBOSOMAL_L16_1"/>
    <property type="match status" value="1"/>
</dbReference>
<dbReference type="PROSITE" id="PS00701">
    <property type="entry name" value="RIBOSOMAL_L16_2"/>
    <property type="match status" value="1"/>
</dbReference>
<keyword id="KW-1185">Reference proteome</keyword>
<keyword id="KW-0687">Ribonucleoprotein</keyword>
<keyword id="KW-0689">Ribosomal protein</keyword>
<keyword id="KW-0694">RNA-binding</keyword>
<keyword id="KW-0699">rRNA-binding</keyword>
<keyword id="KW-0820">tRNA-binding</keyword>
<protein>
    <recommendedName>
        <fullName evidence="1">Large ribosomal subunit protein uL16</fullName>
    </recommendedName>
    <alternativeName>
        <fullName evidence="3">50S ribosomal protein L16</fullName>
    </alternativeName>
</protein>
<organism>
    <name type="scientific">Salinibacter ruber (strain DSM 13855 / M31)</name>
    <dbReference type="NCBI Taxonomy" id="309807"/>
    <lineage>
        <taxon>Bacteria</taxon>
        <taxon>Pseudomonadati</taxon>
        <taxon>Rhodothermota</taxon>
        <taxon>Rhodothermia</taxon>
        <taxon>Rhodothermales</taxon>
        <taxon>Salinibacteraceae</taxon>
        <taxon>Salinibacter</taxon>
    </lineage>
</organism>
<gene>
    <name evidence="1" type="primary">rplP</name>
    <name type="ordered locus">SRU_1042</name>
</gene>
<sequence length="145" mass="16320">MLEPKDTKHRKVQRNQGLKRNKYAVKGTRLSFGDYGLKSLEEGEVNSRQLEAARVAINRYLKRDGKVWIRVFPDKPKTKTPAETRMGKGKGEPEHFVAPVQPGNVIFEVGGGADEESAREALRLGKHKLPLKTKFVVRPGSRAEE</sequence>
<evidence type="ECO:0000255" key="1">
    <source>
        <dbReference type="HAMAP-Rule" id="MF_01342"/>
    </source>
</evidence>
<evidence type="ECO:0000256" key="2">
    <source>
        <dbReference type="SAM" id="MobiDB-lite"/>
    </source>
</evidence>
<evidence type="ECO:0000305" key="3"/>
<proteinExistence type="inferred from homology"/>
<feature type="chain" id="PRO_0000251670" description="Large ribosomal subunit protein uL16">
    <location>
        <begin position="1"/>
        <end position="145"/>
    </location>
</feature>
<feature type="region of interest" description="Disordered" evidence="2">
    <location>
        <begin position="76"/>
        <end position="97"/>
    </location>
</feature>
<feature type="compositionally biased region" description="Basic and acidic residues" evidence="2">
    <location>
        <begin position="76"/>
        <end position="95"/>
    </location>
</feature>